<accession>Q9P5L0</accession>
<accession>Q7RZC8</accession>
<organism>
    <name type="scientific">Neurospora crassa (strain ATCC 24698 / 74-OR23-1A / CBS 708.71 / DSM 1257 / FGSC 987)</name>
    <dbReference type="NCBI Taxonomy" id="367110"/>
    <lineage>
        <taxon>Eukaryota</taxon>
        <taxon>Fungi</taxon>
        <taxon>Dikarya</taxon>
        <taxon>Ascomycota</taxon>
        <taxon>Pezizomycotina</taxon>
        <taxon>Sordariomycetes</taxon>
        <taxon>Sordariomycetidae</taxon>
        <taxon>Sordariales</taxon>
        <taxon>Sordariaceae</taxon>
        <taxon>Neurospora</taxon>
    </lineage>
</organism>
<proteinExistence type="inferred from homology"/>
<reference key="1">
    <citation type="journal article" date="2003" name="Nucleic Acids Res.">
        <title>What's in the genome of a filamentous fungus? Analysis of the Neurospora genome sequence.</title>
        <authorList>
            <person name="Mannhaupt G."/>
            <person name="Montrone C."/>
            <person name="Haase D."/>
            <person name="Mewes H.-W."/>
            <person name="Aign V."/>
            <person name="Hoheisel J.D."/>
            <person name="Fartmann B."/>
            <person name="Nyakatura G."/>
            <person name="Kempken F."/>
            <person name="Maier J."/>
            <person name="Schulte U."/>
        </authorList>
    </citation>
    <scope>NUCLEOTIDE SEQUENCE [LARGE SCALE GENOMIC DNA]</scope>
    <source>
        <strain>ATCC 24698 / 74-OR23-1A / CBS 708.71 / DSM 1257 / FGSC 987</strain>
    </source>
</reference>
<reference key="2">
    <citation type="journal article" date="2003" name="Nature">
        <title>The genome sequence of the filamentous fungus Neurospora crassa.</title>
        <authorList>
            <person name="Galagan J.E."/>
            <person name="Calvo S.E."/>
            <person name="Borkovich K.A."/>
            <person name="Selker E.U."/>
            <person name="Read N.D."/>
            <person name="Jaffe D.B."/>
            <person name="FitzHugh W."/>
            <person name="Ma L.-J."/>
            <person name="Smirnov S."/>
            <person name="Purcell S."/>
            <person name="Rehman B."/>
            <person name="Elkins T."/>
            <person name="Engels R."/>
            <person name="Wang S."/>
            <person name="Nielsen C.B."/>
            <person name="Butler J."/>
            <person name="Endrizzi M."/>
            <person name="Qui D."/>
            <person name="Ianakiev P."/>
            <person name="Bell-Pedersen D."/>
            <person name="Nelson M.A."/>
            <person name="Werner-Washburne M."/>
            <person name="Selitrennikoff C.P."/>
            <person name="Kinsey J.A."/>
            <person name="Braun E.L."/>
            <person name="Zelter A."/>
            <person name="Schulte U."/>
            <person name="Kothe G.O."/>
            <person name="Jedd G."/>
            <person name="Mewes H.-W."/>
            <person name="Staben C."/>
            <person name="Marcotte E."/>
            <person name="Greenberg D."/>
            <person name="Roy A."/>
            <person name="Foley K."/>
            <person name="Naylor J."/>
            <person name="Stange-Thomann N."/>
            <person name="Barrett R."/>
            <person name="Gnerre S."/>
            <person name="Kamal M."/>
            <person name="Kamvysselis M."/>
            <person name="Mauceli E.W."/>
            <person name="Bielke C."/>
            <person name="Rudd S."/>
            <person name="Frishman D."/>
            <person name="Krystofova S."/>
            <person name="Rasmussen C."/>
            <person name="Metzenberg R.L."/>
            <person name="Perkins D.D."/>
            <person name="Kroken S."/>
            <person name="Cogoni C."/>
            <person name="Macino G."/>
            <person name="Catcheside D.E.A."/>
            <person name="Li W."/>
            <person name="Pratt R.J."/>
            <person name="Osmani S.A."/>
            <person name="DeSouza C.P.C."/>
            <person name="Glass N.L."/>
            <person name="Orbach M.J."/>
            <person name="Berglund J.A."/>
            <person name="Voelker R."/>
            <person name="Yarden O."/>
            <person name="Plamann M."/>
            <person name="Seiler S."/>
            <person name="Dunlap J.C."/>
            <person name="Radford A."/>
            <person name="Aramayo R."/>
            <person name="Natvig D.O."/>
            <person name="Alex L.A."/>
            <person name="Mannhaupt G."/>
            <person name="Ebbole D.J."/>
            <person name="Freitag M."/>
            <person name="Paulsen I."/>
            <person name="Sachs M.S."/>
            <person name="Lander E.S."/>
            <person name="Nusbaum C."/>
            <person name="Birren B.W."/>
        </authorList>
    </citation>
    <scope>NUCLEOTIDE SEQUENCE [LARGE SCALE GENOMIC DNA]</scope>
    <source>
        <strain>ATCC 24698 / 74-OR23-1A / CBS 708.71 / DSM 1257 / FGSC 987</strain>
    </source>
</reference>
<protein>
    <recommendedName>
        <fullName>Probable cytochrome b5</fullName>
    </recommendedName>
</protein>
<sequence>MSAEFTYQDVAEHNTKKDLYVVIHDKVYDITKFVDEHPGGEEVLLDVAGQDSTEAFEDVGHSDEAREALEPLLVGTLKRQAGDPKPKAPLPSSLAPAAQTGTATGLGIGLYAVLVLGGLAGFAAYQYLQAQQGATAPSA</sequence>
<gene>
    <name type="ORF">B23L21.190</name>
    <name type="ORF">NCU03910</name>
</gene>
<feature type="chain" id="PRO_0000166030" description="Probable cytochrome b5">
    <location>
        <begin position="1"/>
        <end position="139"/>
    </location>
</feature>
<feature type="transmembrane region" description="Helical" evidence="2">
    <location>
        <begin position="105"/>
        <end position="125"/>
    </location>
</feature>
<feature type="domain" description="Cytochrome b5 heme-binding" evidence="3">
    <location>
        <begin position="2"/>
        <end position="78"/>
    </location>
</feature>
<feature type="binding site" description="axial binding residue" evidence="3">
    <location>
        <position position="37"/>
    </location>
    <ligand>
        <name>heme</name>
        <dbReference type="ChEBI" id="CHEBI:30413"/>
    </ligand>
    <ligandPart>
        <name>Fe</name>
        <dbReference type="ChEBI" id="CHEBI:18248"/>
    </ligandPart>
</feature>
<feature type="binding site" description="axial binding residue" evidence="3">
    <location>
        <position position="61"/>
    </location>
    <ligand>
        <name>heme</name>
        <dbReference type="ChEBI" id="CHEBI:30413"/>
    </ligand>
    <ligandPart>
        <name>Fe</name>
        <dbReference type="ChEBI" id="CHEBI:18248"/>
    </ligandPart>
</feature>
<dbReference type="EMBL" id="AL356172">
    <property type="protein sequence ID" value="CAB91687.2"/>
    <property type="molecule type" value="Genomic_DNA"/>
</dbReference>
<dbReference type="EMBL" id="CM002241">
    <property type="protein sequence ID" value="EAA28313.3"/>
    <property type="molecule type" value="Genomic_DNA"/>
</dbReference>
<dbReference type="RefSeq" id="XP_957549.3">
    <property type="nucleotide sequence ID" value="XM_952456.3"/>
</dbReference>
<dbReference type="SMR" id="Q9P5L0"/>
<dbReference type="FunCoup" id="Q9P5L0">
    <property type="interactions" value="722"/>
</dbReference>
<dbReference type="STRING" id="367110.Q9P5L0"/>
<dbReference type="PaxDb" id="5141-EFNCRP00000003531"/>
<dbReference type="EnsemblFungi" id="EAA28313">
    <property type="protein sequence ID" value="EAA28313"/>
    <property type="gene ID" value="NCU03910"/>
</dbReference>
<dbReference type="GeneID" id="3873703"/>
<dbReference type="KEGG" id="ncr:NCU03910"/>
<dbReference type="VEuPathDB" id="FungiDB:NCU03910"/>
<dbReference type="HOGENOM" id="CLU_102602_3_2_1"/>
<dbReference type="InParanoid" id="Q9P5L0"/>
<dbReference type="OrthoDB" id="260519at2759"/>
<dbReference type="Proteomes" id="UP000001805">
    <property type="component" value="Chromosome 5, Linkage Group VI"/>
</dbReference>
<dbReference type="GO" id="GO:0005789">
    <property type="term" value="C:endoplasmic reticulum membrane"/>
    <property type="evidence" value="ECO:0000318"/>
    <property type="project" value="GO_Central"/>
</dbReference>
<dbReference type="GO" id="GO:0043231">
    <property type="term" value="C:intracellular membrane-bounded organelle"/>
    <property type="evidence" value="ECO:0000318"/>
    <property type="project" value="GO_Central"/>
</dbReference>
<dbReference type="GO" id="GO:0020037">
    <property type="term" value="F:heme binding"/>
    <property type="evidence" value="ECO:0000318"/>
    <property type="project" value="GO_Central"/>
</dbReference>
<dbReference type="GO" id="GO:0046872">
    <property type="term" value="F:metal ion binding"/>
    <property type="evidence" value="ECO:0007669"/>
    <property type="project" value="UniProtKB-KW"/>
</dbReference>
<dbReference type="GO" id="GO:0016126">
    <property type="term" value="P:sterol biosynthetic process"/>
    <property type="evidence" value="ECO:0000318"/>
    <property type="project" value="GO_Central"/>
</dbReference>
<dbReference type="FunFam" id="3.10.120.10:FF:000002">
    <property type="entry name" value="Cytochrome b5 type B"/>
    <property type="match status" value="1"/>
</dbReference>
<dbReference type="Gene3D" id="3.10.120.10">
    <property type="entry name" value="Cytochrome b5-like heme/steroid binding domain"/>
    <property type="match status" value="1"/>
</dbReference>
<dbReference type="InterPro" id="IPR001199">
    <property type="entry name" value="Cyt_B5-like_heme/steroid-bd"/>
</dbReference>
<dbReference type="InterPro" id="IPR036400">
    <property type="entry name" value="Cyt_B5-like_heme/steroid_sf"/>
</dbReference>
<dbReference type="InterPro" id="IPR018506">
    <property type="entry name" value="Cyt_B5_heme-BS"/>
</dbReference>
<dbReference type="InterPro" id="IPR050668">
    <property type="entry name" value="Cytochrome_b5"/>
</dbReference>
<dbReference type="PANTHER" id="PTHR19359">
    <property type="entry name" value="CYTOCHROME B5"/>
    <property type="match status" value="1"/>
</dbReference>
<dbReference type="PANTHER" id="PTHR19359:SF150">
    <property type="entry name" value="CYTOCHROME B5"/>
    <property type="match status" value="1"/>
</dbReference>
<dbReference type="Pfam" id="PF00173">
    <property type="entry name" value="Cyt-b5"/>
    <property type="match status" value="1"/>
</dbReference>
<dbReference type="PRINTS" id="PR00363">
    <property type="entry name" value="CYTOCHROMEB5"/>
</dbReference>
<dbReference type="SMART" id="SM01117">
    <property type="entry name" value="Cyt-b5"/>
    <property type="match status" value="1"/>
</dbReference>
<dbReference type="SUPFAM" id="SSF55856">
    <property type="entry name" value="Cytochrome b5-like heme/steroid binding domain"/>
    <property type="match status" value="1"/>
</dbReference>
<dbReference type="PROSITE" id="PS00191">
    <property type="entry name" value="CYTOCHROME_B5_1"/>
    <property type="match status" value="1"/>
</dbReference>
<dbReference type="PROSITE" id="PS50255">
    <property type="entry name" value="CYTOCHROME_B5_2"/>
    <property type="match status" value="1"/>
</dbReference>
<comment type="function">
    <text evidence="1">Membrane bound hemoprotein which function as an electron carrier for several membrane bound oxygenases.</text>
</comment>
<comment type="subcellular location">
    <subcellularLocation>
        <location evidence="1">Endoplasmic reticulum membrane</location>
        <topology evidence="1">Single-pass membrane protein</topology>
        <orientation evidence="1">Cytoplasmic side</orientation>
    </subcellularLocation>
    <subcellularLocation>
        <location evidence="1">Microsome membrane</location>
        <topology evidence="1">Single-pass membrane protein</topology>
        <orientation evidence="1">Cytoplasmic side</orientation>
    </subcellularLocation>
</comment>
<comment type="similarity">
    <text evidence="4">Belongs to the cytochrome b5 family.</text>
</comment>
<evidence type="ECO:0000250" key="1"/>
<evidence type="ECO:0000255" key="2"/>
<evidence type="ECO:0000255" key="3">
    <source>
        <dbReference type="PROSITE-ProRule" id="PRU00279"/>
    </source>
</evidence>
<evidence type="ECO:0000305" key="4"/>
<name>CYB5_NEUCR</name>
<keyword id="KW-0249">Electron transport</keyword>
<keyword id="KW-0256">Endoplasmic reticulum</keyword>
<keyword id="KW-0349">Heme</keyword>
<keyword id="KW-0408">Iron</keyword>
<keyword id="KW-0472">Membrane</keyword>
<keyword id="KW-0479">Metal-binding</keyword>
<keyword id="KW-0492">Microsome</keyword>
<keyword id="KW-1185">Reference proteome</keyword>
<keyword id="KW-0812">Transmembrane</keyword>
<keyword id="KW-1133">Transmembrane helix</keyword>
<keyword id="KW-0813">Transport</keyword>